<gene>
    <name type="ordered locus">MM_0803</name>
</gene>
<sequence length="120" mass="13990">MIAMSNDDELEEIRKRRLAEIQRQQAQQPSDMQAAYQQEQARAEMEAQKQSILRQILTPEARERLTTLKMSRPALGEQLELQLISLAQSGRLQSQIDDEQLKTLLMRMQPKKRKTSITRV</sequence>
<proteinExistence type="inferred from homology"/>
<dbReference type="EMBL" id="AE008384">
    <property type="protein sequence ID" value="AAM30499.1"/>
    <property type="molecule type" value="Genomic_DNA"/>
</dbReference>
<dbReference type="RefSeq" id="WP_011032753.1">
    <property type="nucleotide sequence ID" value="NC_003901.1"/>
</dbReference>
<dbReference type="SMR" id="Q8PYQ7"/>
<dbReference type="KEGG" id="mma:MM_0803"/>
<dbReference type="PATRIC" id="fig|192952.21.peg.952"/>
<dbReference type="eggNOG" id="arCOG04179">
    <property type="taxonomic scope" value="Archaea"/>
</dbReference>
<dbReference type="HOGENOM" id="CLU_122978_3_0_2"/>
<dbReference type="Proteomes" id="UP000000595">
    <property type="component" value="Chromosome"/>
</dbReference>
<dbReference type="GO" id="GO:0005829">
    <property type="term" value="C:cytosol"/>
    <property type="evidence" value="ECO:0007669"/>
    <property type="project" value="TreeGrafter"/>
</dbReference>
<dbReference type="GO" id="GO:0003677">
    <property type="term" value="F:DNA binding"/>
    <property type="evidence" value="ECO:0007669"/>
    <property type="project" value="UniProtKB-UniRule"/>
</dbReference>
<dbReference type="Gene3D" id="1.10.8.140">
    <property type="entry name" value="PDCD5-like"/>
    <property type="match status" value="1"/>
</dbReference>
<dbReference type="HAMAP" id="MF_00026">
    <property type="entry name" value="dsDNA_bind"/>
    <property type="match status" value="1"/>
</dbReference>
<dbReference type="InterPro" id="IPR022889">
    <property type="entry name" value="DNA_bind_arc"/>
</dbReference>
<dbReference type="InterPro" id="IPR002836">
    <property type="entry name" value="PDCD5-like"/>
</dbReference>
<dbReference type="InterPro" id="IPR036883">
    <property type="entry name" value="PDCD5-like_sf"/>
</dbReference>
<dbReference type="NCBIfam" id="NF003268">
    <property type="entry name" value="PRK04239.1"/>
    <property type="match status" value="1"/>
</dbReference>
<dbReference type="PANTHER" id="PTHR10840">
    <property type="entry name" value="PROGRAMMED CELL DEATH PROTEIN 5"/>
    <property type="match status" value="1"/>
</dbReference>
<dbReference type="PANTHER" id="PTHR10840:SF0">
    <property type="entry name" value="PROGRAMMED CELL DEATH PROTEIN 5"/>
    <property type="match status" value="1"/>
</dbReference>
<dbReference type="Pfam" id="PF01984">
    <property type="entry name" value="dsDNA_bind"/>
    <property type="match status" value="1"/>
</dbReference>
<dbReference type="PIRSF" id="PIRSF015730">
    <property type="entry name" value="TFAR19"/>
    <property type="match status" value="1"/>
</dbReference>
<dbReference type="SUPFAM" id="SSF46950">
    <property type="entry name" value="Double-stranded DNA-binding domain"/>
    <property type="match status" value="1"/>
</dbReference>
<feature type="chain" id="PRO_0000121557" description="DNA-binding protein MM_0803">
    <location>
        <begin position="1"/>
        <end position="120"/>
    </location>
</feature>
<protein>
    <recommendedName>
        <fullName evidence="1">DNA-binding protein MM_0803</fullName>
    </recommendedName>
</protein>
<keyword id="KW-0238">DNA-binding</keyword>
<reference key="1">
    <citation type="journal article" date="2002" name="J. Mol. Microbiol. Biotechnol.">
        <title>The genome of Methanosarcina mazei: evidence for lateral gene transfer between Bacteria and Archaea.</title>
        <authorList>
            <person name="Deppenmeier U."/>
            <person name="Johann A."/>
            <person name="Hartsch T."/>
            <person name="Merkl R."/>
            <person name="Schmitz R.A."/>
            <person name="Martinez-Arias R."/>
            <person name="Henne A."/>
            <person name="Wiezer A."/>
            <person name="Baeumer S."/>
            <person name="Jacobi C."/>
            <person name="Brueggemann H."/>
            <person name="Lienard T."/>
            <person name="Christmann A."/>
            <person name="Boemecke M."/>
            <person name="Steckel S."/>
            <person name="Bhattacharyya A."/>
            <person name="Lykidis A."/>
            <person name="Overbeek R."/>
            <person name="Klenk H.-P."/>
            <person name="Gunsalus R.P."/>
            <person name="Fritz H.-J."/>
            <person name="Gottschalk G."/>
        </authorList>
    </citation>
    <scope>NUCLEOTIDE SEQUENCE [LARGE SCALE GENOMIC DNA]</scope>
    <source>
        <strain>ATCC BAA-159 / DSM 3647 / Goe1 / Go1 / JCM 11833 / OCM 88</strain>
    </source>
</reference>
<comment type="similarity">
    <text evidence="1">Belongs to the PDCD5 family.</text>
</comment>
<organism>
    <name type="scientific">Methanosarcina mazei (strain ATCC BAA-159 / DSM 3647 / Goe1 / Go1 / JCM 11833 / OCM 88)</name>
    <name type="common">Methanosarcina frisia</name>
    <dbReference type="NCBI Taxonomy" id="192952"/>
    <lineage>
        <taxon>Archaea</taxon>
        <taxon>Methanobacteriati</taxon>
        <taxon>Methanobacteriota</taxon>
        <taxon>Stenosarchaea group</taxon>
        <taxon>Methanomicrobia</taxon>
        <taxon>Methanosarcinales</taxon>
        <taxon>Methanosarcinaceae</taxon>
        <taxon>Methanosarcina</taxon>
    </lineage>
</organism>
<evidence type="ECO:0000255" key="1">
    <source>
        <dbReference type="HAMAP-Rule" id="MF_00026"/>
    </source>
</evidence>
<accession>Q8PYQ7</accession>
<name>Y803_METMA</name>